<reference key="1">
    <citation type="journal article" date="1999" name="Proc. Natl. Acad. Sci. U.S.A.">
        <title>Identification and reconstitution of the origin recognition complex from Schizosaccharomyces pombe.</title>
        <authorList>
            <person name="Moon K.-Y."/>
            <person name="Kong D."/>
            <person name="Lee J.-K."/>
            <person name="Raychaudhuri S."/>
            <person name="Hurwitz J."/>
        </authorList>
    </citation>
    <scope>NUCLEOTIDE SEQUENCE [MRNA]</scope>
    <scope>PROTEIN SEQUENCE OF 58-77; 80-89 AND 376-384</scope>
    <scope>SUBUNIT</scope>
</reference>
<reference key="2">
    <citation type="journal article" date="2002" name="Nature">
        <title>The genome sequence of Schizosaccharomyces pombe.</title>
        <authorList>
            <person name="Wood V."/>
            <person name="Gwilliam R."/>
            <person name="Rajandream M.A."/>
            <person name="Lyne M.H."/>
            <person name="Lyne R."/>
            <person name="Stewart A."/>
            <person name="Sgouros J.G."/>
            <person name="Peat N."/>
            <person name="Hayles J."/>
            <person name="Baker S.G."/>
            <person name="Basham D."/>
            <person name="Bowman S."/>
            <person name="Brooks K."/>
            <person name="Brown D."/>
            <person name="Brown S."/>
            <person name="Chillingworth T."/>
            <person name="Churcher C.M."/>
            <person name="Collins M."/>
            <person name="Connor R."/>
            <person name="Cronin A."/>
            <person name="Davis P."/>
            <person name="Feltwell T."/>
            <person name="Fraser A."/>
            <person name="Gentles S."/>
            <person name="Goble A."/>
            <person name="Hamlin N."/>
            <person name="Harris D.E."/>
            <person name="Hidalgo J."/>
            <person name="Hodgson G."/>
            <person name="Holroyd S."/>
            <person name="Hornsby T."/>
            <person name="Howarth S."/>
            <person name="Huckle E.J."/>
            <person name="Hunt S."/>
            <person name="Jagels K."/>
            <person name="James K.D."/>
            <person name="Jones L."/>
            <person name="Jones M."/>
            <person name="Leather S."/>
            <person name="McDonald S."/>
            <person name="McLean J."/>
            <person name="Mooney P."/>
            <person name="Moule S."/>
            <person name="Mungall K.L."/>
            <person name="Murphy L.D."/>
            <person name="Niblett D."/>
            <person name="Odell C."/>
            <person name="Oliver K."/>
            <person name="O'Neil S."/>
            <person name="Pearson D."/>
            <person name="Quail M.A."/>
            <person name="Rabbinowitsch E."/>
            <person name="Rutherford K.M."/>
            <person name="Rutter S."/>
            <person name="Saunders D."/>
            <person name="Seeger K."/>
            <person name="Sharp S."/>
            <person name="Skelton J."/>
            <person name="Simmonds M.N."/>
            <person name="Squares R."/>
            <person name="Squares S."/>
            <person name="Stevens K."/>
            <person name="Taylor K."/>
            <person name="Taylor R.G."/>
            <person name="Tivey A."/>
            <person name="Walsh S.V."/>
            <person name="Warren T."/>
            <person name="Whitehead S."/>
            <person name="Woodward J.R."/>
            <person name="Volckaert G."/>
            <person name="Aert R."/>
            <person name="Robben J."/>
            <person name="Grymonprez B."/>
            <person name="Weltjens I."/>
            <person name="Vanstreels E."/>
            <person name="Rieger M."/>
            <person name="Schaefer M."/>
            <person name="Mueller-Auer S."/>
            <person name="Gabel C."/>
            <person name="Fuchs M."/>
            <person name="Duesterhoeft A."/>
            <person name="Fritzc C."/>
            <person name="Holzer E."/>
            <person name="Moestl D."/>
            <person name="Hilbert H."/>
            <person name="Borzym K."/>
            <person name="Langer I."/>
            <person name="Beck A."/>
            <person name="Lehrach H."/>
            <person name="Reinhardt R."/>
            <person name="Pohl T.M."/>
            <person name="Eger P."/>
            <person name="Zimmermann W."/>
            <person name="Wedler H."/>
            <person name="Wambutt R."/>
            <person name="Purnelle B."/>
            <person name="Goffeau A."/>
            <person name="Cadieu E."/>
            <person name="Dreano S."/>
            <person name="Gloux S."/>
            <person name="Lelaure V."/>
            <person name="Mottier S."/>
            <person name="Galibert F."/>
            <person name="Aves S.J."/>
            <person name="Xiang Z."/>
            <person name="Hunt C."/>
            <person name="Moore K."/>
            <person name="Hurst S.M."/>
            <person name="Lucas M."/>
            <person name="Rochet M."/>
            <person name="Gaillardin C."/>
            <person name="Tallada V.A."/>
            <person name="Garzon A."/>
            <person name="Thode G."/>
            <person name="Daga R.R."/>
            <person name="Cruzado L."/>
            <person name="Jimenez J."/>
            <person name="Sanchez M."/>
            <person name="del Rey F."/>
            <person name="Benito J."/>
            <person name="Dominguez A."/>
            <person name="Revuelta J.L."/>
            <person name="Moreno S."/>
            <person name="Armstrong J."/>
            <person name="Forsburg S.L."/>
            <person name="Cerutti L."/>
            <person name="Lowe T."/>
            <person name="McCombie W.R."/>
            <person name="Paulsen I."/>
            <person name="Potashkin J."/>
            <person name="Shpakovski G.V."/>
            <person name="Ussery D."/>
            <person name="Barrell B.G."/>
            <person name="Nurse P."/>
        </authorList>
    </citation>
    <scope>NUCLEOTIDE SEQUENCE [LARGE SCALE GENOMIC DNA]</scope>
    <source>
        <strain>972 / ATCC 24843</strain>
    </source>
</reference>
<reference key="3">
    <citation type="journal article" date="2002" name="J. Biol. Chem.">
        <title>Purification and characterization of the Schizosaccharomyces pombe origin recognition complex: interaction with origin DNA and Cdc18 protein.</title>
        <authorList>
            <person name="Chuang R.-Y."/>
            <person name="Chretien L."/>
            <person name="Dai J."/>
            <person name="Kelly T.J."/>
        </authorList>
    </citation>
    <scope>CHARACTERIZATION OF ORC</scope>
    <scope>INTERACTION WITH CDC18</scope>
</reference>
<protein>
    <recommendedName>
        <fullName>Origin recognition complex subunit 3</fullName>
    </recommendedName>
</protein>
<organism>
    <name type="scientific">Schizosaccharomyces pombe (strain 972 / ATCC 24843)</name>
    <name type="common">Fission yeast</name>
    <dbReference type="NCBI Taxonomy" id="284812"/>
    <lineage>
        <taxon>Eukaryota</taxon>
        <taxon>Fungi</taxon>
        <taxon>Dikarya</taxon>
        <taxon>Ascomycota</taxon>
        <taxon>Taphrinomycotina</taxon>
        <taxon>Schizosaccharomycetes</taxon>
        <taxon>Schizosaccharomycetales</taxon>
        <taxon>Schizosaccharomycetaceae</taxon>
        <taxon>Schizosaccharomyces</taxon>
    </lineage>
</organism>
<keyword id="KW-0903">Direct protein sequencing</keyword>
<keyword id="KW-0235">DNA replication</keyword>
<keyword id="KW-0238">DNA-binding</keyword>
<keyword id="KW-0539">Nucleus</keyword>
<keyword id="KW-1185">Reference proteome</keyword>
<proteinExistence type="evidence at protein level"/>
<name>ORC3_SCHPO</name>
<gene>
    <name type="primary">orc3</name>
    <name type="synonym">orp3</name>
    <name type="ORF">SPAC3H1.01c</name>
    <name type="ORF">SPAP14E8.06c</name>
</gene>
<evidence type="ECO:0000269" key="1">
    <source>
    </source>
</evidence>
<evidence type="ECO:0000269" key="2">
    <source>
    </source>
</evidence>
<evidence type="ECO:0000305" key="3"/>
<accession>Q10067</accession>
<accession>Q9P7G2</accession>
<accession>Q9UTT0</accession>
<sequence>MSAILQYDSVSKGTYSVKPKPTESLGNEFSEGLFVPLIGGKEPIEYVKLRENLCTKVLNELEEITTHTTYDSNARVLRQLCEHASEPVDETGLLRTAIVCDKSSNSMHLKFYEQLKDDMEKIGWKNFVVLNLKAHRDLKSCFRVIKGGSFGLGVLSYDIEKLDEKTVLVLEDVEDCDRRLLSSLVEALSSLVRHSKLQGCLYTIFNLKIPLEMFDTSLDSKFLSNVKTKVFNMKASTEILESLFTSIEESLSLKFGWRTRRFFRSMFYERSWSVERVIECIRYSILTHFYGNALSIIEHLIYQKDFHLISPLHLTTLRTVPSFQRHIEQRLEIGDLESINYVEKMLNDDTYFQEMVIQMCENLLYRERLLRTQAKIWHELEMAVKTTTRISFADYLETFLQGDWLSSPQYKSICQAILRMNSTKALACLDYLNENIFTGNQTMKCLEIHQELSELIRNSSTNYLEPVEVRMQNYSGTKHTRKVVESGFDKSIIDFSKILKKIVGLLDEEVQYGCLGTESIDMYPFYEVLFYDYCRPLNQAFASGHQRSVIHSSCMDPEYYVGDEKKIDSEFSNAEKDGKDLISWLPDLSILYKLYSESGALLNLYDWYIAFSEHLQAGKENLKEDDNHPRESPQGNLQRELNELDEDKRKLEEAKLQSRFLFGLEELRFLGLIKPTARKTDHVMKTIYHQ</sequence>
<dbReference type="EMBL" id="AF188642">
    <property type="protein sequence ID" value="AAF05949.1"/>
    <property type="molecule type" value="mRNA"/>
</dbReference>
<dbReference type="EMBL" id="CU329670">
    <property type="protein sequence ID" value="CAB77007.2"/>
    <property type="molecule type" value="Genomic_DNA"/>
</dbReference>
<dbReference type="PIR" id="T38733">
    <property type="entry name" value="T38733"/>
</dbReference>
<dbReference type="RefSeq" id="XP_001713061.1">
    <property type="nucleotide sequence ID" value="XM_001713009.2"/>
</dbReference>
<dbReference type="SMR" id="Q10067"/>
<dbReference type="BioGRID" id="279676">
    <property type="interactions" value="6"/>
</dbReference>
<dbReference type="FunCoup" id="Q10067">
    <property type="interactions" value="438"/>
</dbReference>
<dbReference type="STRING" id="284812.Q10067"/>
<dbReference type="iPTMnet" id="Q10067"/>
<dbReference type="PaxDb" id="4896-SPAC3H1.01c.1"/>
<dbReference type="EnsemblFungi" id="SPAC3H1.01c.1">
    <property type="protein sequence ID" value="SPAC3H1.01c.1:pep"/>
    <property type="gene ID" value="SPAC3H1.01c"/>
</dbReference>
<dbReference type="PomBase" id="SPAC3H1.01c">
    <property type="gene designation" value="orc3"/>
</dbReference>
<dbReference type="VEuPathDB" id="FungiDB:SPAC3H1.01c"/>
<dbReference type="eggNOG" id="KOG2538">
    <property type="taxonomic scope" value="Eukaryota"/>
</dbReference>
<dbReference type="HOGENOM" id="CLU_015257_1_0_1"/>
<dbReference type="InParanoid" id="Q10067"/>
<dbReference type="OMA" id="FYERSWS"/>
<dbReference type="PhylomeDB" id="Q10067"/>
<dbReference type="Reactome" id="R-SPO-176187">
    <property type="pathway name" value="Activation of ATR in response to replication stress"/>
</dbReference>
<dbReference type="Reactome" id="R-SPO-68616">
    <property type="pathway name" value="Assembly of the ORC complex at the origin of replication"/>
</dbReference>
<dbReference type="Reactome" id="R-SPO-68689">
    <property type="pathway name" value="CDC6 association with the ORC:origin complex"/>
</dbReference>
<dbReference type="Reactome" id="R-SPO-68949">
    <property type="pathway name" value="Orc1 removal from chromatin"/>
</dbReference>
<dbReference type="Reactome" id="R-SPO-68962">
    <property type="pathway name" value="Activation of the pre-replicative complex"/>
</dbReference>
<dbReference type="PRO" id="PR:Q10067"/>
<dbReference type="Proteomes" id="UP000002485">
    <property type="component" value="Chromosome I"/>
</dbReference>
<dbReference type="GO" id="GO:0000785">
    <property type="term" value="C:chromatin"/>
    <property type="evidence" value="ECO:0000314"/>
    <property type="project" value="PomBase"/>
</dbReference>
<dbReference type="GO" id="GO:0031261">
    <property type="term" value="C:DNA replication preinitiation complex"/>
    <property type="evidence" value="ECO:0000318"/>
    <property type="project" value="GO_Central"/>
</dbReference>
<dbReference type="GO" id="GO:0005664">
    <property type="term" value="C:nuclear origin of replication recognition complex"/>
    <property type="evidence" value="ECO:0000314"/>
    <property type="project" value="UniProtKB"/>
</dbReference>
<dbReference type="GO" id="GO:0005656">
    <property type="term" value="C:nuclear pre-replicative complex"/>
    <property type="evidence" value="ECO:0000318"/>
    <property type="project" value="GO_Central"/>
</dbReference>
<dbReference type="GO" id="GO:0043596">
    <property type="term" value="C:nuclear replication fork"/>
    <property type="evidence" value="ECO:0000305"/>
    <property type="project" value="PomBase"/>
</dbReference>
<dbReference type="GO" id="GO:0003688">
    <property type="term" value="F:DNA replication origin binding"/>
    <property type="evidence" value="ECO:0000314"/>
    <property type="project" value="UniProtKB"/>
</dbReference>
<dbReference type="GO" id="GO:0006270">
    <property type="term" value="P:DNA replication initiation"/>
    <property type="evidence" value="ECO:0000318"/>
    <property type="project" value="GO_Central"/>
</dbReference>
<dbReference type="CDD" id="cd20704">
    <property type="entry name" value="Orc3"/>
    <property type="match status" value="2"/>
</dbReference>
<dbReference type="InterPro" id="IPR020795">
    <property type="entry name" value="ORC3"/>
</dbReference>
<dbReference type="InterPro" id="IPR045667">
    <property type="entry name" value="ORC3_N"/>
</dbReference>
<dbReference type="InterPro" id="IPR040855">
    <property type="entry name" value="ORC_WH_C"/>
</dbReference>
<dbReference type="PANTHER" id="PTHR12748">
    <property type="entry name" value="ORIGIN RECOGNITION COMPLEX SUBUNIT 3"/>
    <property type="match status" value="1"/>
</dbReference>
<dbReference type="PANTHER" id="PTHR12748:SF0">
    <property type="entry name" value="ORIGIN RECOGNITION COMPLEX SUBUNIT 3"/>
    <property type="match status" value="1"/>
</dbReference>
<dbReference type="Pfam" id="PF07034">
    <property type="entry name" value="ORC3_N"/>
    <property type="match status" value="1"/>
</dbReference>
<dbReference type="Pfam" id="PF18137">
    <property type="entry name" value="ORC_WH_C"/>
    <property type="match status" value="1"/>
</dbReference>
<feature type="chain" id="PRO_0000127085" description="Origin recognition complex subunit 3">
    <location>
        <begin position="1"/>
        <end position="690"/>
    </location>
</feature>
<comment type="function">
    <text>Component of the origin recognition complex (ORC) that binds origins of replication. It has a role in both chromosomal replication and mating type transcriptional silencing. ORC binds to multiple sites within the ars1 origin of DNA replication in an ATP-independent manner.</text>
</comment>
<comment type="subunit">
    <text evidence="1 2">ORC is composed of six subunits. ORC interacts with cdc18, recruiting it to the ars1 origin of replication.</text>
</comment>
<comment type="subcellular location">
    <subcellularLocation>
        <location>Nucleus</location>
    </subcellularLocation>
</comment>
<comment type="similarity">
    <text evidence="3">Belongs to the ORC3 family.</text>
</comment>